<proteinExistence type="evidence at protein level"/>
<comment type="function">
    <text evidence="2">Calcium-regulated, actin-modulating protein that binds to the plus (or barbed) ends of actin monomers or filaments, preventing monomer exchange (end-blocking or capping). It can promote the assembly of monomers into filaments (nucleation) as well as sever filaments already formed (By similarity). Plays a role in ciliogenesis (By similarity).</text>
</comment>
<comment type="subunit">
    <text evidence="1 3">Binds to actin and to fibronectin. Identified in a complex composed of ACTA1, COBL, GSN and TMSB4X (By similarity). Interacts with the inactive form of EIF2AK2/PKR (By similarity). Interacts with FLII (By similarity).</text>
</comment>
<comment type="subcellular location">
    <subcellularLocation>
        <location>Cytoplasm</location>
        <location>Cytoskeleton</location>
    </subcellularLocation>
</comment>
<comment type="domain">
    <text evidence="2">Comprises six structurally related gelsolin-like (G1-G6) domains, that, in a calcium-free environment, are packed together to form a compact globular structure in which the putative actin-binding sequences are not sufficiently exposed to enable binding to occur. Binding calcium may release the connections that join the N- and C-terminal halves of gelsolin, enabling each half to bind actin relatively independently. G1 and G4 bind two Ca(2+) in a type I and in a type II manner. G2, G3, G5 and G6 bind only one Ca(2+) in a type II manner. Type I Ca(2+) binding sites are shared between actin and gelsolin-like repeats G1 and G4. Type I binding governs the strength of interactions between gelsolin and actin by direct participation at the binding interface. Ca(2+) binding to G2 and G6 disrupts the interactions between G2 and G6, releases the C-terminal tail, and induces large interdomain rearrangements that result in the exposure of the F-actin-binding site on G2 and contributes to the activation of gelsolin. Binding to phosphoinositides may inhibit the severing and capping properties of gelsolin.</text>
</comment>
<comment type="similarity">
    <text evidence="7">Belongs to the villin/gelsolin family.</text>
</comment>
<evidence type="ECO:0000250" key="1"/>
<evidence type="ECO:0000250" key="2">
    <source>
        <dbReference type="UniProtKB" id="P06396"/>
    </source>
</evidence>
<evidence type="ECO:0000250" key="3">
    <source>
        <dbReference type="UniProtKB" id="P13020"/>
    </source>
</evidence>
<evidence type="ECO:0000255" key="4"/>
<evidence type="ECO:0000269" key="5">
    <source>
    </source>
</evidence>
<evidence type="ECO:0000269" key="6">
    <source>
    </source>
</evidence>
<evidence type="ECO:0000305" key="7"/>
<evidence type="ECO:0007744" key="8">
    <source>
        <dbReference type="PDB" id="1D0N"/>
    </source>
</evidence>
<evidence type="ECO:0007744" key="9">
    <source>
        <dbReference type="PDB" id="1RGI"/>
    </source>
</evidence>
<evidence type="ECO:0007829" key="10">
    <source>
        <dbReference type="PDB" id="1D0N"/>
    </source>
</evidence>
<evidence type="ECO:0007829" key="11">
    <source>
        <dbReference type="PDB" id="1RGI"/>
    </source>
</evidence>
<evidence type="ECO:0007829" key="12">
    <source>
        <dbReference type="PDB" id="2FGH"/>
    </source>
</evidence>
<dbReference type="EMBL" id="U31699">
    <property type="protein sequence ID" value="AAC13353.1"/>
    <property type="molecule type" value="mRNA"/>
</dbReference>
<dbReference type="RefSeq" id="NP_001075422.1">
    <property type="nucleotide sequence ID" value="NM_001081953.1"/>
</dbReference>
<dbReference type="PDB" id="1D0N">
    <property type="method" value="X-ray"/>
    <property type="resolution" value="2.50 A"/>
    <property type="chains" value="A/B=3-731"/>
</dbReference>
<dbReference type="PDB" id="1RGI">
    <property type="method" value="X-ray"/>
    <property type="resolution" value="3.00 A"/>
    <property type="chains" value="G=2-347"/>
</dbReference>
<dbReference type="PDB" id="2FGH">
    <property type="method" value="X-ray"/>
    <property type="resolution" value="2.80 A"/>
    <property type="chains" value="A/B=2-731"/>
</dbReference>
<dbReference type="PDBsum" id="1D0N"/>
<dbReference type="PDBsum" id="1RGI"/>
<dbReference type="PDBsum" id="2FGH"/>
<dbReference type="SMR" id="Q28372"/>
<dbReference type="STRING" id="9796.ENSECAP00000026815"/>
<dbReference type="PaxDb" id="9796-ENSECAP00000026815"/>
<dbReference type="PeptideAtlas" id="Q28372"/>
<dbReference type="GeneID" id="100034186"/>
<dbReference type="KEGG" id="ecb:100034186"/>
<dbReference type="CTD" id="2934"/>
<dbReference type="InParanoid" id="Q28372"/>
<dbReference type="OrthoDB" id="6375767at2759"/>
<dbReference type="EvolutionaryTrace" id="Q28372"/>
<dbReference type="PRO" id="PR:Q28372"/>
<dbReference type="Proteomes" id="UP000002281">
    <property type="component" value="Unplaced"/>
</dbReference>
<dbReference type="GO" id="GO:0015629">
    <property type="term" value="C:actin cytoskeleton"/>
    <property type="evidence" value="ECO:0000318"/>
    <property type="project" value="GO_Central"/>
</dbReference>
<dbReference type="GO" id="GO:0005737">
    <property type="term" value="C:cytoplasm"/>
    <property type="evidence" value="ECO:0000318"/>
    <property type="project" value="GO_Central"/>
</dbReference>
<dbReference type="GO" id="GO:0005615">
    <property type="term" value="C:extracellular space"/>
    <property type="evidence" value="ECO:0000318"/>
    <property type="project" value="GO_Central"/>
</dbReference>
<dbReference type="GO" id="GO:0051015">
    <property type="term" value="F:actin filament binding"/>
    <property type="evidence" value="ECO:0000318"/>
    <property type="project" value="GO_Central"/>
</dbReference>
<dbReference type="GO" id="GO:0046872">
    <property type="term" value="F:metal ion binding"/>
    <property type="evidence" value="ECO:0007669"/>
    <property type="project" value="UniProtKB-KW"/>
</dbReference>
<dbReference type="GO" id="GO:0005546">
    <property type="term" value="F:phosphatidylinositol-4,5-bisphosphate binding"/>
    <property type="evidence" value="ECO:0000318"/>
    <property type="project" value="GO_Central"/>
</dbReference>
<dbReference type="GO" id="GO:0051014">
    <property type="term" value="P:actin filament severing"/>
    <property type="evidence" value="ECO:0000318"/>
    <property type="project" value="GO_Central"/>
</dbReference>
<dbReference type="GO" id="GO:0008154">
    <property type="term" value="P:actin polymerization or depolymerization"/>
    <property type="evidence" value="ECO:0000318"/>
    <property type="project" value="GO_Central"/>
</dbReference>
<dbReference type="GO" id="GO:0051016">
    <property type="term" value="P:barbed-end actin filament capping"/>
    <property type="evidence" value="ECO:0000318"/>
    <property type="project" value="GO_Central"/>
</dbReference>
<dbReference type="GO" id="GO:0030031">
    <property type="term" value="P:cell projection assembly"/>
    <property type="evidence" value="ECO:0000318"/>
    <property type="project" value="GO_Central"/>
</dbReference>
<dbReference type="GO" id="GO:0007417">
    <property type="term" value="P:central nervous system development"/>
    <property type="evidence" value="ECO:0000318"/>
    <property type="project" value="GO_Central"/>
</dbReference>
<dbReference type="GO" id="GO:0060271">
    <property type="term" value="P:cilium assembly"/>
    <property type="evidence" value="ECO:0000250"/>
    <property type="project" value="UniProtKB"/>
</dbReference>
<dbReference type="CDD" id="cd11290">
    <property type="entry name" value="gelsolin_S1_like"/>
    <property type="match status" value="1"/>
</dbReference>
<dbReference type="CDD" id="cd11289">
    <property type="entry name" value="gelsolin_S2_like"/>
    <property type="match status" value="1"/>
</dbReference>
<dbReference type="CDD" id="cd11292">
    <property type="entry name" value="gelsolin_S3_like"/>
    <property type="match status" value="1"/>
</dbReference>
<dbReference type="CDD" id="cd11293">
    <property type="entry name" value="gelsolin_S4_like"/>
    <property type="match status" value="1"/>
</dbReference>
<dbReference type="CDD" id="cd11288">
    <property type="entry name" value="gelsolin_S5_like"/>
    <property type="match status" value="1"/>
</dbReference>
<dbReference type="CDD" id="cd11291">
    <property type="entry name" value="gelsolin_S6_like"/>
    <property type="match status" value="1"/>
</dbReference>
<dbReference type="FunFam" id="3.40.20.10:FF:000001">
    <property type="entry name" value="Gelsolin"/>
    <property type="match status" value="1"/>
</dbReference>
<dbReference type="FunFam" id="3.40.20.10:FF:000002">
    <property type="entry name" value="Gelsolin"/>
    <property type="match status" value="1"/>
</dbReference>
<dbReference type="FunFam" id="3.40.20.10:FF:000004">
    <property type="entry name" value="Gelsolin"/>
    <property type="match status" value="1"/>
</dbReference>
<dbReference type="FunFam" id="3.40.20.10:FF:000005">
    <property type="entry name" value="Gelsolin"/>
    <property type="match status" value="1"/>
</dbReference>
<dbReference type="FunFam" id="3.40.20.10:FF:000009">
    <property type="entry name" value="gelsolin isoform X1"/>
    <property type="match status" value="1"/>
</dbReference>
<dbReference type="FunFam" id="3.40.20.10:FF:000008">
    <property type="entry name" value="gelsolin isoform X2"/>
    <property type="match status" value="1"/>
</dbReference>
<dbReference type="Gene3D" id="3.40.20.10">
    <property type="entry name" value="Severin"/>
    <property type="match status" value="6"/>
</dbReference>
<dbReference type="InterPro" id="IPR029006">
    <property type="entry name" value="ADF-H/Gelsolin-like_dom_sf"/>
</dbReference>
<dbReference type="InterPro" id="IPR007123">
    <property type="entry name" value="Gelsolin-like_dom"/>
</dbReference>
<dbReference type="InterPro" id="IPR007122">
    <property type="entry name" value="Villin/Gelsolin"/>
</dbReference>
<dbReference type="PANTHER" id="PTHR11977:SF29">
    <property type="entry name" value="GELSOLIN"/>
    <property type="match status" value="1"/>
</dbReference>
<dbReference type="PANTHER" id="PTHR11977">
    <property type="entry name" value="VILLIN"/>
    <property type="match status" value="1"/>
</dbReference>
<dbReference type="Pfam" id="PF00626">
    <property type="entry name" value="Gelsolin"/>
    <property type="match status" value="6"/>
</dbReference>
<dbReference type="PRINTS" id="PR00597">
    <property type="entry name" value="GELSOLIN"/>
</dbReference>
<dbReference type="SMART" id="SM00262">
    <property type="entry name" value="GEL"/>
    <property type="match status" value="6"/>
</dbReference>
<dbReference type="SUPFAM" id="SSF55753">
    <property type="entry name" value="Actin depolymerizing proteins"/>
    <property type="match status" value="6"/>
</dbReference>
<reference key="1">
    <citation type="journal article" date="1998" name="Eur. J. Biochem.">
        <title>Equus caballus gelsolin -- cDNA sequence and protein structural implications.</title>
        <authorList>
            <person name="Koepf E.K."/>
            <person name="Hewitt J."/>
            <person name="Vo H."/>
            <person name="Macgillivray R.T.A."/>
            <person name="Burtnick L.D."/>
        </authorList>
    </citation>
    <scope>NUCLEOTIDE SEQUENCE [MRNA]</scope>
    <source>
        <tissue>Smooth muscle</tissue>
    </source>
</reference>
<reference key="2">
    <citation type="journal article" date="1997" name="Cell">
        <title>The crystal structure of plasma gelsolin: implications for actin severing, capping, and nucleation.</title>
        <authorList>
            <person name="Burtnick L.D."/>
            <person name="Koepf E.K."/>
            <person name="Grimes J."/>
            <person name="Jones E.Y."/>
            <person name="Stuart D.I."/>
            <person name="McLaughlin P.J."/>
            <person name="Robinson R.C."/>
        </authorList>
    </citation>
    <scope>X-RAY CRYSTALLOGRAPHY (2.5 ANGSTROMS)</scope>
</reference>
<reference evidence="9" key="3">
    <citation type="journal article" date="2004" name="EMBO J.">
        <title>Structure of the N-terminal half of gelsolin bound to actin: roles in severing, apoptosis and FAF.</title>
        <authorList>
            <person name="Burtnick L.D."/>
            <person name="Urosev D."/>
            <person name="Irobi E."/>
            <person name="Narayan K."/>
            <person name="Robinson R.C."/>
        </authorList>
    </citation>
    <scope>X-RAY CRYSTALLOGRAPHY (3.00 ANGSTROMS) OF 2-347 IN COMPLEX WITH CALCIUM AND RABBIT ACTIN</scope>
</reference>
<gene>
    <name type="primary">GSN</name>
</gene>
<name>GELS_HORSE</name>
<organism>
    <name type="scientific">Equus caballus</name>
    <name type="common">Horse</name>
    <dbReference type="NCBI Taxonomy" id="9796"/>
    <lineage>
        <taxon>Eukaryota</taxon>
        <taxon>Metazoa</taxon>
        <taxon>Chordata</taxon>
        <taxon>Craniata</taxon>
        <taxon>Vertebrata</taxon>
        <taxon>Euteleostomi</taxon>
        <taxon>Mammalia</taxon>
        <taxon>Eutheria</taxon>
        <taxon>Laurasiatheria</taxon>
        <taxon>Perissodactyla</taxon>
        <taxon>Equidae</taxon>
        <taxon>Equus</taxon>
    </lineage>
</organism>
<protein>
    <recommendedName>
        <fullName>Gelsolin</fullName>
    </recommendedName>
    <alternativeName>
        <fullName>Actin-depolymerizing factor</fullName>
        <shortName>ADF</shortName>
    </alternativeName>
    <alternativeName>
        <fullName>Brevin</fullName>
    </alternativeName>
</protein>
<sequence>MVVEHPEFLKAGKEPGLQIWRVEKFDLVPVPPNLYGDFFTGDAYVILKTVQLRNGILQYDLHYWLGNECSQDESGAAAIFTVQLDDYLNGRAVQHREVQGFESATFLGYFKSGLKYKKGGVASGFKHVVPNEVVVQRLLQVKGRRVVRATEVPVSWESFNNGDCFILDLGNNIYQWCGSKSNRFERLKATQVSKGIRDNERSGRAQVSVFEEGAEPEAMLQVLGPKPTLPEATEDTVKEDAANRKLAKLYKVSNGAGPMVVSLVADENPFAQGALRSEDCFILDHGKDGKIFVWKGKQANMEERKAALKTASDFISKMDYPKQTQVSVLPEGGETPLFRQFFKNWRDPDQTEGLGLAYLSSHIAHVERVPFDAATLHTSTAMAAQHGMDDDGTGQKQIWRVEGSNKVPVDPATYGQFYGGDSYIILYNYRHGSRQGQIIYNWQGAQSTQDEVAASAILTAQLDEELGGTPVQSRVVQGKEPAHLMSLFGGKPMIVYKGGTSREGGQTAPASTRLFQVRASSSGATRAVEIIPKAGALNSNDAFVLKTPSAAYLWVGAGASEAEKTGAQELLRVLRAQPVQVAEGSEPDSFWEALGGKATYRTSPRLKDKKMDAHPPRLFACSNKIGRFVIEEVPGEFMQEDLATDDVMLLDTWDQVFVWVGKDSQDEEKTEALTSAKRYIDTDPAHRDRRTPITVVKQGFEPPSFVGWFLGWDDSYWSVDPLDRALAELAA</sequence>
<accession>Q28372</accession>
<accession>Q95180</accession>
<feature type="chain" id="PRO_0000367500" description="Gelsolin">
    <location>
        <begin position="1"/>
        <end position="731"/>
    </location>
</feature>
<feature type="repeat" description="Gelsolin-like 1" evidence="4">
    <location>
        <begin position="25"/>
        <end position="107"/>
    </location>
</feature>
<feature type="repeat" description="Gelsolin-like 2" evidence="4">
    <location>
        <begin position="147"/>
        <end position="219"/>
    </location>
</feature>
<feature type="repeat" description="Gelsolin-like 3" evidence="4">
    <location>
        <begin position="266"/>
        <end position="338"/>
    </location>
</feature>
<feature type="repeat" description="Gelsolin-like 4" evidence="4">
    <location>
        <begin position="404"/>
        <end position="485"/>
    </location>
</feature>
<feature type="repeat" description="Gelsolin-like 5" evidence="4">
    <location>
        <begin position="533"/>
        <end position="591"/>
    </location>
</feature>
<feature type="repeat" description="Gelsolin-like 6" evidence="4">
    <location>
        <begin position="630"/>
        <end position="705"/>
    </location>
</feature>
<feature type="region of interest" description="Actin-severing" evidence="4">
    <location>
        <begin position="2"/>
        <end position="125"/>
    </location>
</feature>
<feature type="region of interest" description="Actin-actin interfilament contact point">
    <location>
        <begin position="72"/>
        <end position="75"/>
    </location>
</feature>
<feature type="region of interest" description="Actin-binding, Ca-sensitive" evidence="4">
    <location>
        <begin position="383"/>
        <end position="731"/>
    </location>
</feature>
<feature type="binding site" evidence="5 9">
    <location>
        <position position="41"/>
    </location>
    <ligand>
        <name>Ca(2+)</name>
        <dbReference type="ChEBI" id="CHEBI:29108"/>
        <label>1</label>
        <note>type II</note>
    </ligand>
</feature>
<feature type="binding site" evidence="5 9">
    <location>
        <position position="42"/>
    </location>
    <ligand>
        <name>Ca(2+)</name>
        <dbReference type="ChEBI" id="CHEBI:29108"/>
        <label>1</label>
        <note>type II</note>
    </ligand>
</feature>
<feature type="binding site" evidence="5 9">
    <location>
        <position position="73"/>
    </location>
    <ligand>
        <name>Ca(2+)</name>
        <dbReference type="ChEBI" id="CHEBI:29108"/>
        <label>1</label>
        <note>type II</note>
    </ligand>
</feature>
<feature type="binding site" evidence="5 9">
    <location>
        <position position="85"/>
    </location>
    <ligand>
        <name>Ca(2+)</name>
        <dbReference type="ChEBI" id="CHEBI:29108"/>
        <label>2</label>
        <note>type I</note>
    </ligand>
</feature>
<feature type="binding site" evidence="5 9">
    <location>
        <position position="90"/>
    </location>
    <ligand>
        <name>Ca(2+)</name>
        <dbReference type="ChEBI" id="CHEBI:29108"/>
        <label>2</label>
        <note>type I</note>
    </ligand>
</feature>
<feature type="binding site" evidence="5 9">
    <location>
        <position position="92"/>
    </location>
    <ligand>
        <name>Ca(2+)</name>
        <dbReference type="ChEBI" id="CHEBI:29108"/>
        <label>2</label>
        <note>type I</note>
    </ligand>
</feature>
<feature type="binding site" evidence="1">
    <location>
        <begin position="111"/>
        <end position="118"/>
    </location>
    <ligand>
        <name>a 1,2-diacyl-sn-glycero-3-phospho-(1D-myo-inositol-4,5-bisphosphate)</name>
        <dbReference type="ChEBI" id="CHEBI:58456"/>
    </ligand>
</feature>
<feature type="binding site" evidence="5 9">
    <location>
        <position position="121"/>
    </location>
    <ligand>
        <name>Ca(2+)</name>
        <dbReference type="ChEBI" id="CHEBI:29108"/>
        <label>1</label>
        <note>type II</note>
    </ligand>
</feature>
<feature type="binding site" evidence="1">
    <location>
        <begin position="137"/>
        <end position="145"/>
    </location>
    <ligand>
        <name>a 1,2-diacyl-sn-glycero-3-phospho-(1D-myo-inositol-4,5-bisphosphate)</name>
        <dbReference type="ChEBI" id="CHEBI:58456"/>
    </ligand>
</feature>
<feature type="binding site" evidence="2">
    <location>
        <position position="162"/>
    </location>
    <ligand>
        <name>Ca(2+)</name>
        <dbReference type="ChEBI" id="CHEBI:29108"/>
        <label>3</label>
        <note>type II</note>
    </ligand>
</feature>
<feature type="binding site" evidence="2">
    <location>
        <position position="163"/>
    </location>
    <ligand>
        <name>Ca(2+)</name>
        <dbReference type="ChEBI" id="CHEBI:29108"/>
        <label>3</label>
        <note>type II</note>
    </ligand>
</feature>
<feature type="binding site" evidence="2">
    <location>
        <position position="185"/>
    </location>
    <ligand>
        <name>Ca(2+)</name>
        <dbReference type="ChEBI" id="CHEBI:29108"/>
        <label>3</label>
        <note>type II</note>
    </ligand>
</feature>
<feature type="binding site" evidence="2">
    <location>
        <position position="235"/>
    </location>
    <ligand>
        <name>Ca(2+)</name>
        <dbReference type="ChEBI" id="CHEBI:29108"/>
        <label>3</label>
        <note>type II</note>
    </ligand>
</feature>
<feature type="binding site" evidence="5 9">
    <location>
        <position position="278"/>
    </location>
    <ligand>
        <name>Ca(2+)</name>
        <dbReference type="ChEBI" id="CHEBI:29108"/>
        <label>4</label>
        <note>type II</note>
    </ligand>
</feature>
<feature type="binding site" evidence="5 9">
    <location>
        <position position="279"/>
    </location>
    <ligand>
        <name>Ca(2+)</name>
        <dbReference type="ChEBI" id="CHEBI:29108"/>
        <label>4</label>
        <note>type II</note>
    </ligand>
</feature>
<feature type="binding site" evidence="5 9">
    <location>
        <position position="303"/>
    </location>
    <ligand>
        <name>Ca(2+)</name>
        <dbReference type="ChEBI" id="CHEBI:29108"/>
        <label>4</label>
        <note>type II</note>
    </ligand>
</feature>
<feature type="binding site" evidence="2">
    <location>
        <position position="420"/>
    </location>
    <ligand>
        <name>Ca(2+)</name>
        <dbReference type="ChEBI" id="CHEBI:29108"/>
        <label>5</label>
        <note>type II</note>
    </ligand>
</feature>
<feature type="binding site" evidence="2">
    <location>
        <position position="421"/>
    </location>
    <ligand>
        <name>Ca(2+)</name>
        <dbReference type="ChEBI" id="CHEBI:29108"/>
        <label>5</label>
        <note>type II</note>
    </ligand>
</feature>
<feature type="binding site" evidence="2">
    <location>
        <position position="451"/>
    </location>
    <ligand>
        <name>Ca(2+)</name>
        <dbReference type="ChEBI" id="CHEBI:29108"/>
        <label>5</label>
        <note>type II</note>
    </ligand>
</feature>
<feature type="binding site" evidence="2">
    <location>
        <position position="463"/>
    </location>
    <ligand>
        <name>Ca(2+)</name>
        <dbReference type="ChEBI" id="CHEBI:29108"/>
        <label>6</label>
        <note>type I</note>
    </ligand>
</feature>
<feature type="binding site" evidence="2">
    <location>
        <position position="468"/>
    </location>
    <ligand>
        <name>Ca(2+)</name>
        <dbReference type="ChEBI" id="CHEBI:29108"/>
        <label>6</label>
        <note>type I</note>
    </ligand>
</feature>
<feature type="binding site" evidence="2">
    <location>
        <position position="470"/>
    </location>
    <ligand>
        <name>Ca(2+)</name>
        <dbReference type="ChEBI" id="CHEBI:29108"/>
        <label>6</label>
        <note>type I</note>
    </ligand>
</feature>
<feature type="binding site" evidence="2">
    <location>
        <position position="500"/>
    </location>
    <ligand>
        <name>Ca(2+)</name>
        <dbReference type="ChEBI" id="CHEBI:29108"/>
        <label>5</label>
        <note>type II</note>
    </ligand>
</feature>
<feature type="binding site" evidence="2">
    <location>
        <position position="540"/>
    </location>
    <ligand>
        <name>Ca(2+)</name>
        <dbReference type="ChEBI" id="CHEBI:29108"/>
        <label>7</label>
        <note>type II</note>
    </ligand>
</feature>
<feature type="binding site" evidence="2">
    <location>
        <position position="541"/>
    </location>
    <ligand>
        <name>Ca(2+)</name>
        <dbReference type="ChEBI" id="CHEBI:29108"/>
        <label>7</label>
        <note>type II</note>
    </ligand>
</feature>
<feature type="binding site" evidence="2">
    <location>
        <position position="563"/>
    </location>
    <ligand>
        <name>Ca(2+)</name>
        <dbReference type="ChEBI" id="CHEBI:29108"/>
        <label>7</label>
        <note>type II</note>
    </ligand>
</feature>
<feature type="binding site" evidence="2">
    <location>
        <position position="645"/>
    </location>
    <ligand>
        <name>Ca(2+)</name>
        <dbReference type="ChEBI" id="CHEBI:29108"/>
        <label>8</label>
        <note>type II</note>
    </ligand>
</feature>
<feature type="binding site" evidence="2">
    <location>
        <position position="646"/>
    </location>
    <ligand>
        <name>Ca(2+)</name>
        <dbReference type="ChEBI" id="CHEBI:29108"/>
        <label>8</label>
        <note>type II</note>
    </ligand>
</feature>
<feature type="binding site" evidence="2">
    <location>
        <position position="668"/>
    </location>
    <ligand>
        <name>Ca(2+)</name>
        <dbReference type="ChEBI" id="CHEBI:29108"/>
        <label>8</label>
        <note>type II</note>
    </ligand>
</feature>
<feature type="modified residue" description="Phosphotyrosine" evidence="2">
    <location>
        <position position="35"/>
    </location>
</feature>
<feature type="modified residue" description="Phosphotyrosine" evidence="2">
    <location>
        <position position="358"/>
    </location>
</feature>
<feature type="modified residue" description="Phosphotyrosine" evidence="2">
    <location>
        <position position="414"/>
    </location>
</feature>
<feature type="modified residue" description="N6-acetyllysine" evidence="3">
    <location>
        <position position="533"/>
    </location>
</feature>
<feature type="modified residue" description="Phosphotyrosine" evidence="2">
    <location>
        <position position="552"/>
    </location>
</feature>
<feature type="modified residue" description="Phosphotyrosine" evidence="2">
    <location>
        <position position="600"/>
    </location>
</feature>
<feature type="modified residue" description="Phosphothreonine" evidence="2">
    <location>
        <position position="691"/>
    </location>
</feature>
<feature type="disulfide bond" evidence="6 8">
    <location>
        <begin position="164"/>
        <end position="177"/>
    </location>
</feature>
<feature type="helix" evidence="10">
    <location>
        <begin position="8"/>
        <end position="10"/>
    </location>
</feature>
<feature type="strand" evidence="10">
    <location>
        <begin position="13"/>
        <end position="22"/>
    </location>
</feature>
<feature type="strand" evidence="10">
    <location>
        <begin position="24"/>
        <end position="29"/>
    </location>
</feature>
<feature type="helix" evidence="10">
    <location>
        <begin position="32"/>
        <end position="34"/>
    </location>
</feature>
<feature type="strand" evidence="10">
    <location>
        <begin position="37"/>
        <end position="39"/>
    </location>
</feature>
<feature type="strand" evidence="10">
    <location>
        <begin position="43"/>
        <end position="51"/>
    </location>
</feature>
<feature type="strand" evidence="10">
    <location>
        <begin position="57"/>
        <end position="65"/>
    </location>
</feature>
<feature type="helix" evidence="10">
    <location>
        <begin position="71"/>
        <end position="87"/>
    </location>
</feature>
<feature type="turn" evidence="12">
    <location>
        <begin position="88"/>
        <end position="90"/>
    </location>
</feature>
<feature type="strand" evidence="10">
    <location>
        <begin position="93"/>
        <end position="98"/>
    </location>
</feature>
<feature type="helix" evidence="10">
    <location>
        <begin position="104"/>
        <end position="108"/>
    </location>
</feature>
<feature type="strand" evidence="10">
    <location>
        <begin position="114"/>
        <end position="118"/>
    </location>
</feature>
<feature type="turn" evidence="10">
    <location>
        <begin position="121"/>
        <end position="124"/>
    </location>
</feature>
<feature type="strand" evidence="10">
    <location>
        <begin position="137"/>
        <end position="142"/>
    </location>
</feature>
<feature type="strand" evidence="10">
    <location>
        <begin position="144"/>
        <end position="146"/>
    </location>
</feature>
<feature type="strand" evidence="10">
    <location>
        <begin position="148"/>
        <end position="152"/>
    </location>
</feature>
<feature type="helix" evidence="10">
    <location>
        <begin position="156"/>
        <end position="158"/>
    </location>
</feature>
<feature type="strand" evidence="10">
    <location>
        <begin position="161"/>
        <end position="168"/>
    </location>
</feature>
<feature type="strand" evidence="10">
    <location>
        <begin position="170"/>
        <end position="177"/>
    </location>
</feature>
<feature type="helix" evidence="10">
    <location>
        <begin position="183"/>
        <end position="199"/>
    </location>
</feature>
<feature type="helix" evidence="10">
    <location>
        <begin position="201"/>
        <end position="203"/>
    </location>
</feature>
<feature type="strand" evidence="10">
    <location>
        <begin position="205"/>
        <end position="211"/>
    </location>
</feature>
<feature type="helix" evidence="10">
    <location>
        <begin position="217"/>
        <end position="223"/>
    </location>
</feature>
<feature type="helix" evidence="10">
    <location>
        <begin position="234"/>
        <end position="236"/>
    </location>
</feature>
<feature type="helix" evidence="11">
    <location>
        <begin position="237"/>
        <end position="243"/>
    </location>
</feature>
<feature type="strand" evidence="10">
    <location>
        <begin position="248"/>
        <end position="253"/>
    </location>
</feature>
<feature type="strand" evidence="10">
    <location>
        <begin position="255"/>
        <end position="258"/>
    </location>
</feature>
<feature type="strand" evidence="10">
    <location>
        <begin position="260"/>
        <end position="270"/>
    </location>
</feature>
<feature type="helix" evidence="10">
    <location>
        <begin position="272"/>
        <end position="274"/>
    </location>
</feature>
<feature type="strand" evidence="10">
    <location>
        <begin position="279"/>
        <end position="285"/>
    </location>
</feature>
<feature type="helix" evidence="10">
    <location>
        <begin position="286"/>
        <end position="288"/>
    </location>
</feature>
<feature type="strand" evidence="10">
    <location>
        <begin position="290"/>
        <end position="295"/>
    </location>
</feature>
<feature type="strand" evidence="12">
    <location>
        <begin position="297"/>
        <end position="299"/>
    </location>
</feature>
<feature type="helix" evidence="10">
    <location>
        <begin position="301"/>
        <end position="304"/>
    </location>
</feature>
<feature type="helix" evidence="10">
    <location>
        <begin position="307"/>
        <end position="317"/>
    </location>
</feature>
<feature type="strand" evidence="10">
    <location>
        <begin position="325"/>
        <end position="330"/>
    </location>
</feature>
<feature type="helix" evidence="10">
    <location>
        <begin position="336"/>
        <end position="339"/>
    </location>
</feature>
<feature type="strand" evidence="12">
    <location>
        <begin position="342"/>
        <end position="344"/>
    </location>
</feature>
<feature type="strand" evidence="10">
    <location>
        <begin position="351"/>
        <end position="355"/>
    </location>
</feature>
<feature type="helix" evidence="10">
    <location>
        <begin position="361"/>
        <end position="363"/>
    </location>
</feature>
<feature type="turn" evidence="10">
    <location>
        <begin position="373"/>
        <end position="375"/>
    </location>
</feature>
<feature type="helix" evidence="10">
    <location>
        <begin position="376"/>
        <end position="378"/>
    </location>
</feature>
<feature type="helix" evidence="10">
    <location>
        <begin position="380"/>
        <end position="386"/>
    </location>
</feature>
<feature type="strand" evidence="10">
    <location>
        <begin position="396"/>
        <end position="402"/>
    </location>
</feature>
<feature type="strand" evidence="10">
    <location>
        <begin position="405"/>
        <end position="408"/>
    </location>
</feature>
<feature type="helix" evidence="10">
    <location>
        <begin position="411"/>
        <end position="413"/>
    </location>
</feature>
<feature type="strand" evidence="10">
    <location>
        <begin position="416"/>
        <end position="418"/>
    </location>
</feature>
<feature type="strand" evidence="10">
    <location>
        <begin position="421"/>
        <end position="431"/>
    </location>
</feature>
<feature type="strand" evidence="10">
    <location>
        <begin position="434"/>
        <end position="443"/>
    </location>
</feature>
<feature type="helix" evidence="10">
    <location>
        <begin position="449"/>
        <end position="464"/>
    </location>
</feature>
<feature type="turn" evidence="10">
    <location>
        <begin position="465"/>
        <end position="467"/>
    </location>
</feature>
<feature type="strand" evidence="10">
    <location>
        <begin position="470"/>
        <end position="476"/>
    </location>
</feature>
<feature type="helix" evidence="10">
    <location>
        <begin position="482"/>
        <end position="485"/>
    </location>
</feature>
<feature type="strand" evidence="10">
    <location>
        <begin position="493"/>
        <end position="498"/>
    </location>
</feature>
<feature type="turn" evidence="12">
    <location>
        <begin position="503"/>
        <end position="505"/>
    </location>
</feature>
<feature type="strand" evidence="10">
    <location>
        <begin position="511"/>
        <end position="519"/>
    </location>
</feature>
<feature type="strand" evidence="10">
    <location>
        <begin position="525"/>
        <end position="530"/>
    </location>
</feature>
<feature type="helix" evidence="10">
    <location>
        <begin position="534"/>
        <end position="536"/>
    </location>
</feature>
<feature type="strand" evidence="10">
    <location>
        <begin position="539"/>
        <end position="546"/>
    </location>
</feature>
<feature type="strand" evidence="12">
    <location>
        <begin position="551"/>
        <end position="555"/>
    </location>
</feature>
<feature type="helix" evidence="10">
    <location>
        <begin position="561"/>
        <end position="574"/>
    </location>
</feature>
<feature type="strand" evidence="12">
    <location>
        <begin position="580"/>
        <end position="582"/>
    </location>
</feature>
<feature type="helix" evidence="10">
    <location>
        <begin position="588"/>
        <end position="592"/>
    </location>
</feature>
<feature type="turn" evidence="10">
    <location>
        <begin position="593"/>
        <end position="595"/>
    </location>
</feature>
<feature type="helix" evidence="10">
    <location>
        <begin position="610"/>
        <end position="613"/>
    </location>
</feature>
<feature type="strand" evidence="10">
    <location>
        <begin position="617"/>
        <end position="622"/>
    </location>
</feature>
<feature type="turn" evidence="10">
    <location>
        <begin position="624"/>
        <end position="626"/>
    </location>
</feature>
<feature type="strand" evidence="10">
    <location>
        <begin position="629"/>
        <end position="632"/>
    </location>
</feature>
<feature type="helix" evidence="10">
    <location>
        <begin position="639"/>
        <end position="641"/>
    </location>
</feature>
<feature type="strand" evidence="10">
    <location>
        <begin position="646"/>
        <end position="651"/>
    </location>
</feature>
<feature type="strand" evidence="10">
    <location>
        <begin position="656"/>
        <end position="660"/>
    </location>
</feature>
<feature type="helix" evidence="10">
    <location>
        <begin position="666"/>
        <end position="669"/>
    </location>
</feature>
<feature type="helix" evidence="10">
    <location>
        <begin position="672"/>
        <end position="682"/>
    </location>
</feature>
<feature type="strand" evidence="10">
    <location>
        <begin position="693"/>
        <end position="697"/>
    </location>
</feature>
<feature type="helix" evidence="10">
    <location>
        <begin position="703"/>
        <end position="706"/>
    </location>
</feature>
<feature type="helix" evidence="10">
    <location>
        <begin position="714"/>
        <end position="717"/>
    </location>
</feature>
<feature type="helix" evidence="10">
    <location>
        <begin position="721"/>
        <end position="729"/>
    </location>
</feature>
<keyword id="KW-0002">3D-structure</keyword>
<keyword id="KW-0007">Acetylation</keyword>
<keyword id="KW-0117">Actin capping</keyword>
<keyword id="KW-0009">Actin-binding</keyword>
<keyword id="KW-0106">Calcium</keyword>
<keyword id="KW-0970">Cilium biogenesis/degradation</keyword>
<keyword id="KW-0963">Cytoplasm</keyword>
<keyword id="KW-0206">Cytoskeleton</keyword>
<keyword id="KW-1015">Disulfide bond</keyword>
<keyword id="KW-0479">Metal-binding</keyword>
<keyword id="KW-0597">Phosphoprotein</keyword>
<keyword id="KW-1185">Reference proteome</keyword>
<keyword id="KW-0677">Repeat</keyword>